<name>XPO7_CHICK</name>
<organism>
    <name type="scientific">Gallus gallus</name>
    <name type="common">Chicken</name>
    <dbReference type="NCBI Taxonomy" id="9031"/>
    <lineage>
        <taxon>Eukaryota</taxon>
        <taxon>Metazoa</taxon>
        <taxon>Chordata</taxon>
        <taxon>Craniata</taxon>
        <taxon>Vertebrata</taxon>
        <taxon>Euteleostomi</taxon>
        <taxon>Archelosauria</taxon>
        <taxon>Archosauria</taxon>
        <taxon>Dinosauria</taxon>
        <taxon>Saurischia</taxon>
        <taxon>Theropoda</taxon>
        <taxon>Coelurosauria</taxon>
        <taxon>Aves</taxon>
        <taxon>Neognathae</taxon>
        <taxon>Galloanserae</taxon>
        <taxon>Galliformes</taxon>
        <taxon>Phasianidae</taxon>
        <taxon>Phasianinae</taxon>
        <taxon>Gallus</taxon>
    </lineage>
</organism>
<protein>
    <recommendedName>
        <fullName>Exportin-7</fullName>
    </recommendedName>
</protein>
<keyword id="KW-0963">Cytoplasm</keyword>
<keyword id="KW-0539">Nucleus</keyword>
<keyword id="KW-0653">Protein transport</keyword>
<keyword id="KW-1185">Reference proteome</keyword>
<keyword id="KW-0813">Transport</keyword>
<gene>
    <name type="primary">XPO7</name>
    <name type="ORF">RCJMB04_4p4</name>
</gene>
<comment type="function">
    <text evidence="1">Mediates the nuclear export of proteins (cargos) with broad substrate specificity.</text>
</comment>
<comment type="subcellular location">
    <subcellularLocation>
        <location evidence="1">Cytoplasm</location>
    </subcellularLocation>
    <subcellularLocation>
        <location evidence="1">Nucleus</location>
    </subcellularLocation>
</comment>
<comment type="similarity">
    <text evidence="3">Belongs to the exportin family.</text>
</comment>
<proteinExistence type="evidence at transcript level"/>
<feature type="chain" id="PRO_0000237674" description="Exportin-7">
    <location>
        <begin position="1"/>
        <end position="1087"/>
    </location>
</feature>
<feature type="domain" description="Importin N-terminal" evidence="2">
    <location>
        <begin position="30"/>
        <end position="96"/>
    </location>
</feature>
<dbReference type="EMBL" id="AJ719654">
    <property type="protein sequence ID" value="CAG31313.1"/>
    <property type="molecule type" value="mRNA"/>
</dbReference>
<dbReference type="RefSeq" id="NP_001012960.1">
    <property type="nucleotide sequence ID" value="NM_001012942.1"/>
</dbReference>
<dbReference type="SMR" id="Q5ZLT0"/>
<dbReference type="FunCoup" id="Q5ZLT0">
    <property type="interactions" value="3547"/>
</dbReference>
<dbReference type="STRING" id="9031.ENSGALP00000072791"/>
<dbReference type="PaxDb" id="9031-ENSGALP00000002839"/>
<dbReference type="GeneID" id="426925"/>
<dbReference type="KEGG" id="gga:426925"/>
<dbReference type="CTD" id="23039"/>
<dbReference type="VEuPathDB" id="HostDB:geneid_426925"/>
<dbReference type="eggNOG" id="KOG1410">
    <property type="taxonomic scope" value="Eukaryota"/>
</dbReference>
<dbReference type="InParanoid" id="Q5ZLT0"/>
<dbReference type="OrthoDB" id="244158at2759"/>
<dbReference type="PhylomeDB" id="Q5ZLT0"/>
<dbReference type="PRO" id="PR:Q5ZLT0"/>
<dbReference type="Proteomes" id="UP000000539">
    <property type="component" value="Unassembled WGS sequence"/>
</dbReference>
<dbReference type="GO" id="GO:0005737">
    <property type="term" value="C:cytoplasm"/>
    <property type="evidence" value="ECO:0000318"/>
    <property type="project" value="GO_Central"/>
</dbReference>
<dbReference type="GO" id="GO:0005643">
    <property type="term" value="C:nuclear pore"/>
    <property type="evidence" value="ECO:0000318"/>
    <property type="project" value="GO_Central"/>
</dbReference>
<dbReference type="GO" id="GO:0005049">
    <property type="term" value="F:nuclear export signal receptor activity"/>
    <property type="evidence" value="ECO:0000318"/>
    <property type="project" value="GO_Central"/>
</dbReference>
<dbReference type="GO" id="GO:0031267">
    <property type="term" value="F:small GTPase binding"/>
    <property type="evidence" value="ECO:0007669"/>
    <property type="project" value="InterPro"/>
</dbReference>
<dbReference type="GO" id="GO:0006611">
    <property type="term" value="P:protein export from nucleus"/>
    <property type="evidence" value="ECO:0000318"/>
    <property type="project" value="GO_Central"/>
</dbReference>
<dbReference type="FunFam" id="1.25.10.10:FF:000042">
    <property type="entry name" value="exportin-7 isoform X1"/>
    <property type="match status" value="1"/>
</dbReference>
<dbReference type="FunFam" id="1.25.10.10:FF:000059">
    <property type="entry name" value="exportin-7 isoform X2"/>
    <property type="match status" value="1"/>
</dbReference>
<dbReference type="Gene3D" id="1.25.10.10">
    <property type="entry name" value="Leucine-rich Repeat Variant"/>
    <property type="match status" value="2"/>
</dbReference>
<dbReference type="InterPro" id="IPR011989">
    <property type="entry name" value="ARM-like"/>
</dbReference>
<dbReference type="InterPro" id="IPR016024">
    <property type="entry name" value="ARM-type_fold"/>
</dbReference>
<dbReference type="InterPro" id="IPR001494">
    <property type="entry name" value="Importin-beta_N"/>
</dbReference>
<dbReference type="InterPro" id="IPR044189">
    <property type="entry name" value="XPO4/7-like"/>
</dbReference>
<dbReference type="PANTHER" id="PTHR12596">
    <property type="entry name" value="EXPORTIN 4,7-RELATED"/>
    <property type="match status" value="1"/>
</dbReference>
<dbReference type="PANTHER" id="PTHR12596:SF11">
    <property type="entry name" value="EXPORTIN-7"/>
    <property type="match status" value="1"/>
</dbReference>
<dbReference type="Pfam" id="PF03810">
    <property type="entry name" value="IBN_N"/>
    <property type="match status" value="1"/>
</dbReference>
<dbReference type="SMART" id="SM00913">
    <property type="entry name" value="IBN_N"/>
    <property type="match status" value="1"/>
</dbReference>
<dbReference type="SUPFAM" id="SSF48371">
    <property type="entry name" value="ARM repeat"/>
    <property type="match status" value="1"/>
</dbReference>
<dbReference type="PROSITE" id="PS50166">
    <property type="entry name" value="IMPORTIN_B_NT"/>
    <property type="match status" value="1"/>
</dbReference>
<reference key="1">
    <citation type="journal article" date="2005" name="Genome Biol.">
        <title>Full-length cDNAs from chicken bursal lymphocytes to facilitate gene function analysis.</title>
        <authorList>
            <person name="Caldwell R.B."/>
            <person name="Kierzek A.M."/>
            <person name="Arakawa H."/>
            <person name="Bezzubov Y."/>
            <person name="Zaim J."/>
            <person name="Fiedler P."/>
            <person name="Kutter S."/>
            <person name="Blagodatski A."/>
            <person name="Kostovska D."/>
            <person name="Koter M."/>
            <person name="Plachy J."/>
            <person name="Carninci P."/>
            <person name="Hayashizaki Y."/>
            <person name="Buerstedde J.-M."/>
        </authorList>
    </citation>
    <scope>NUCLEOTIDE SEQUENCE [LARGE SCALE MRNA]</scope>
    <source>
        <strain>CB</strain>
        <tissue>Bursa of Fabricius</tissue>
    </source>
</reference>
<evidence type="ECO:0000250" key="1"/>
<evidence type="ECO:0000255" key="2">
    <source>
        <dbReference type="PROSITE-ProRule" id="PRU00115"/>
    </source>
</evidence>
<evidence type="ECO:0000305" key="3"/>
<accession>Q5ZLT0</accession>
<sequence length="1087" mass="123876">MADHVQSLAQLENLCKQLYETTDTATRLQAEKALVEFTNSPDCLSKCQLLLERGSSSYSQLLAATCLTKLVSRTNNPLPLEQRIDIRNYVLNYLATRPKLATFVTQALIQLYARITKLGWFDCQKDEYVFRNVITDVTRFLQDSVEHCIIGVTILSQLTNEINQADTTHPLTKHRKIASSFRDSSLFDIFTLSCNLLKQASGKNLNLNDESQHGLLMQLLKLTHNCLNFDFIGTSTDESSDDLCTVQIPTSWRSAFLDSSTLQLFFDLYHSIPPSFSPLVLSCLVQIASVRRSLFNNAERAKFLSHLVDGVKRILENPQSLSDPNNYHEFCRLLARLKSNYQLGELVKVENYPEVIRLIANFTVTSLQHWEFAPNSVHYLLSLWQRLAASVPYVKATEPHMLETYTPEVTKAYITSRLESVHIILRDGLEDPLDDTGLVQQQLDQLSTIGRCEYEKTCALLVQLFDQSAQSYQELLQSATASPMDVAVQEGRLTWLVYIIGAVIGGRVSFASTDEQDAMDGELVCRVLQLMNLTDSRLAQAGNEKLELAMLSFFEQFRKIYIGDQVQKSSKLYRRLSEVLGLNDETMVLSVFIGKIITNLKYWGRCEPITSKTLQLLNDLSIGYSSVRKLVKLSAVQFMLNNHTSEHFSFLGINNQSNLTDMRCRTTFYTALGRLLMVDLGEDEDQYEQFMLPLTAAFETVAQMFSTNTFNEQEAKRTLVGLVRDLRGIAFAFNAKTSFMMLFEWIYPSYMPILQRAIELWYHDPACTTPVLKLMAELVHNRSQRLQFDVSSPNGILLFRETSKMITTYGNRILTLGEVPKDQVYALKLKGISICFSMLKAALSGSYVNFGVFRLYGDDALDNALQTFIKLLLSIPHSDLLDYPKLSQSYYSLLEVLTQDHMNFIASLEPHVIMYILSSISEGLTALDTMVCTGCCSCLDHIVTYLFKQLSRSTKKRTTPLTQESDRFLHIMQQHPEMIQQMLSTVLNIIIFEDCRNQWSMSRPLLGLILLNEKYFSDLRNSIVNSQPPEKQQAMHLCFENLMEGIERNLLTKNRDRFTQNLSAFRREVNDSMKNSPYGVNSNDMMS</sequence>